<feature type="chain" id="PRO_0000322099" description="Riboflavin kinase">
    <location>
        <begin position="1"/>
        <end position="210"/>
    </location>
</feature>
<feature type="region of interest" description="H-T-H motif-like">
    <location>
        <begin position="1"/>
        <end position="81"/>
    </location>
</feature>
<feature type="region of interest" description="Riboflavin kinase">
    <location>
        <begin position="82"/>
        <end position="210"/>
    </location>
</feature>
<feature type="binding site" evidence="1">
    <location>
        <begin position="91"/>
        <end position="96"/>
    </location>
    <ligand>
        <name>CDP</name>
        <dbReference type="ChEBI" id="CHEBI:58069"/>
    </ligand>
</feature>
<feature type="binding site" evidence="1">
    <location>
        <position position="120"/>
    </location>
    <ligand>
        <name>Mg(2+)</name>
        <dbReference type="ChEBI" id="CHEBI:18420"/>
    </ligand>
</feature>
<feature type="binding site" evidence="1">
    <location>
        <position position="122"/>
    </location>
    <ligand>
        <name>Mg(2+)</name>
        <dbReference type="ChEBI" id="CHEBI:18420"/>
    </ligand>
</feature>
<feature type="binding site" evidence="1">
    <location>
        <position position="177"/>
    </location>
    <ligand>
        <name>FMN</name>
        <dbReference type="ChEBI" id="CHEBI:58210"/>
    </ligand>
</feature>
<feature type="binding site" evidence="1">
    <location>
        <position position="185"/>
    </location>
    <ligand>
        <name>FMN</name>
        <dbReference type="ChEBI" id="CHEBI:58210"/>
    </ligand>
</feature>
<feature type="binding site" evidence="1">
    <location>
        <begin position="190"/>
        <end position="193"/>
    </location>
    <ligand>
        <name>CDP</name>
        <dbReference type="ChEBI" id="CHEBI:58069"/>
    </ligand>
</feature>
<name>RIFK_PYRAE</name>
<comment type="function">
    <text evidence="1">Catalyzes the CTP-dependent phosphorylation of riboflavin (vitamin B2) to form flavin mononucleotide (FMN).</text>
</comment>
<comment type="catalytic activity">
    <reaction>
        <text>riboflavin + CTP = CDP + FMN + H(+)</text>
        <dbReference type="Rhea" id="RHEA:25021"/>
        <dbReference type="ChEBI" id="CHEBI:15378"/>
        <dbReference type="ChEBI" id="CHEBI:37563"/>
        <dbReference type="ChEBI" id="CHEBI:57986"/>
        <dbReference type="ChEBI" id="CHEBI:58069"/>
        <dbReference type="ChEBI" id="CHEBI:58210"/>
        <dbReference type="EC" id="2.7.1.161"/>
    </reaction>
</comment>
<comment type="cofactor">
    <cofactor evidence="1">
        <name>Mg(2+)</name>
        <dbReference type="ChEBI" id="CHEBI:18420"/>
    </cofactor>
    <text evidence="1">Binds 1 Mg(2+) ion per subunit.</text>
</comment>
<comment type="pathway">
    <text>Cofactor biosynthesis; FMN biosynthesis; FMN from riboflavin (CTP route): step 1/1.</text>
</comment>
<comment type="similarity">
    <text evidence="2">Belongs to the archaeal riboflavin kinase family.</text>
</comment>
<dbReference type="EC" id="2.7.1.161"/>
<dbReference type="EMBL" id="AE009441">
    <property type="protein sequence ID" value="AAL63989.1"/>
    <property type="molecule type" value="Genomic_DNA"/>
</dbReference>
<dbReference type="RefSeq" id="WP_011008457.1">
    <property type="nucleotide sequence ID" value="NC_003364.1"/>
</dbReference>
<dbReference type="SMR" id="Q8ZVR7"/>
<dbReference type="FunCoup" id="Q8ZVR7">
    <property type="interactions" value="8"/>
</dbReference>
<dbReference type="STRING" id="178306.PAE2157"/>
<dbReference type="EnsemblBacteria" id="AAL63989">
    <property type="protein sequence ID" value="AAL63989"/>
    <property type="gene ID" value="PAE2157"/>
</dbReference>
<dbReference type="GeneID" id="1464322"/>
<dbReference type="KEGG" id="pai:PAE2157"/>
<dbReference type="PATRIC" id="fig|178306.9.peg.1595"/>
<dbReference type="eggNOG" id="arCOG01904">
    <property type="taxonomic scope" value="Archaea"/>
</dbReference>
<dbReference type="HOGENOM" id="CLU_088476_0_0_2"/>
<dbReference type="InParanoid" id="Q8ZVR7"/>
<dbReference type="UniPathway" id="UPA00276">
    <property type="reaction ID" value="UER00929"/>
</dbReference>
<dbReference type="Proteomes" id="UP000002439">
    <property type="component" value="Chromosome"/>
</dbReference>
<dbReference type="GO" id="GO:0000287">
    <property type="term" value="F:magnesium ion binding"/>
    <property type="evidence" value="ECO:0007669"/>
    <property type="project" value="UniProtKB-UniRule"/>
</dbReference>
<dbReference type="GO" id="GO:0000166">
    <property type="term" value="F:nucleotide binding"/>
    <property type="evidence" value="ECO:0007669"/>
    <property type="project" value="UniProtKB-UniRule"/>
</dbReference>
<dbReference type="GO" id="GO:0008531">
    <property type="term" value="F:riboflavin kinase activity"/>
    <property type="evidence" value="ECO:0007669"/>
    <property type="project" value="InterPro"/>
</dbReference>
<dbReference type="GO" id="GO:0009398">
    <property type="term" value="P:FMN biosynthetic process"/>
    <property type="evidence" value="ECO:0007669"/>
    <property type="project" value="UniProtKB-UniRule"/>
</dbReference>
<dbReference type="GO" id="GO:0009231">
    <property type="term" value="P:riboflavin biosynthetic process"/>
    <property type="evidence" value="ECO:0007669"/>
    <property type="project" value="InterPro"/>
</dbReference>
<dbReference type="Gene3D" id="2.40.30.30">
    <property type="entry name" value="Riboflavin kinase-like"/>
    <property type="match status" value="1"/>
</dbReference>
<dbReference type="Gene3D" id="1.10.10.10">
    <property type="entry name" value="Winged helix-like DNA-binding domain superfamily/Winged helix DNA-binding domain"/>
    <property type="match status" value="1"/>
</dbReference>
<dbReference type="HAMAP" id="MF_01285">
    <property type="entry name" value="Riboflavin_kinase"/>
    <property type="match status" value="1"/>
</dbReference>
<dbReference type="InterPro" id="IPR039063">
    <property type="entry name" value="RibK_CTP-dep"/>
</dbReference>
<dbReference type="InterPro" id="IPR023470">
    <property type="entry name" value="Riboflavin_kinase_archaeal"/>
</dbReference>
<dbReference type="InterPro" id="IPR023602">
    <property type="entry name" value="Riboflavin_kinase_CTP-dep"/>
</dbReference>
<dbReference type="InterPro" id="IPR023465">
    <property type="entry name" value="Riboflavin_kinase_dom_sf"/>
</dbReference>
<dbReference type="InterPro" id="IPR036388">
    <property type="entry name" value="WH-like_DNA-bd_sf"/>
</dbReference>
<dbReference type="InterPro" id="IPR036390">
    <property type="entry name" value="WH_DNA-bd_sf"/>
</dbReference>
<dbReference type="PANTHER" id="PTHR40706">
    <property type="entry name" value="RIBOFLAVIN KINASE"/>
    <property type="match status" value="1"/>
</dbReference>
<dbReference type="PANTHER" id="PTHR40706:SF1">
    <property type="entry name" value="RIBOFLAVIN KINASE"/>
    <property type="match status" value="1"/>
</dbReference>
<dbReference type="Pfam" id="PF01982">
    <property type="entry name" value="CTP-dep_RFKase"/>
    <property type="match status" value="1"/>
</dbReference>
<dbReference type="SUPFAM" id="SSF82114">
    <property type="entry name" value="Riboflavin kinase-like"/>
    <property type="match status" value="1"/>
</dbReference>
<dbReference type="SUPFAM" id="SSF46785">
    <property type="entry name" value="Winged helix' DNA-binding domain"/>
    <property type="match status" value="1"/>
</dbReference>
<keyword id="KW-0285">Flavoprotein</keyword>
<keyword id="KW-0288">FMN</keyword>
<keyword id="KW-0418">Kinase</keyword>
<keyword id="KW-0460">Magnesium</keyword>
<keyword id="KW-0479">Metal-binding</keyword>
<keyword id="KW-0547">Nucleotide-binding</keyword>
<keyword id="KW-1185">Reference proteome</keyword>
<keyword id="KW-0808">Transferase</keyword>
<accession>Q8ZVR7</accession>
<reference key="1">
    <citation type="journal article" date="2002" name="Proc. Natl. Acad. Sci. U.S.A.">
        <title>Genome sequence of the hyperthermophilic crenarchaeon Pyrobaculum aerophilum.</title>
        <authorList>
            <person name="Fitz-Gibbon S.T."/>
            <person name="Ladner H."/>
            <person name="Kim U.-J."/>
            <person name="Stetter K.O."/>
            <person name="Simon M.I."/>
            <person name="Miller J.H."/>
        </authorList>
    </citation>
    <scope>NUCLEOTIDE SEQUENCE [LARGE SCALE GENOMIC DNA]</scope>
    <source>
        <strain>ATCC 51768 / DSM 7523 / JCM 9630 / CIP 104966 / NBRC 100827 / IM2</strain>
    </source>
</reference>
<evidence type="ECO:0000250" key="1"/>
<evidence type="ECO:0000305" key="2"/>
<sequence length="210" mass="23377">MECKERRLIGDLIALSYVEGLPVAEAAKRLCVTRQGLYKLLKQLRNEGYVAEGPLIKITQKGRDLLSSVLRDLLRYFNIASIRLIGRVISGLGEGAFYISLEGYRRAIEEKLGFTPFPGTLNIKLDPQYLPYRRYLDGLPGIVIPGFTNGLRTYGGVKAFKAKINGVEGAVVMPERTHHPTDVIEIIAPVKLRDALNLKDGDIVEVEILL</sequence>
<gene>
    <name type="primary">ribK</name>
    <name type="ordered locus">PAE2157</name>
</gene>
<organism>
    <name type="scientific">Pyrobaculum aerophilum (strain ATCC 51768 / DSM 7523 / JCM 9630 / CIP 104966 / NBRC 100827 / IM2)</name>
    <dbReference type="NCBI Taxonomy" id="178306"/>
    <lineage>
        <taxon>Archaea</taxon>
        <taxon>Thermoproteota</taxon>
        <taxon>Thermoprotei</taxon>
        <taxon>Thermoproteales</taxon>
        <taxon>Thermoproteaceae</taxon>
        <taxon>Pyrobaculum</taxon>
    </lineage>
</organism>
<protein>
    <recommendedName>
        <fullName>Riboflavin kinase</fullName>
        <shortName>RFK</shortName>
        <ecNumber>2.7.1.161</ecNumber>
    </recommendedName>
    <alternativeName>
        <fullName>CTP-dependent riboflavin kinase</fullName>
    </alternativeName>
    <alternativeName>
        <fullName>CTP:riboflavin 5'-phosphotransferase</fullName>
    </alternativeName>
    <alternativeName>
        <fullName>Flavokinase</fullName>
    </alternativeName>
</protein>
<proteinExistence type="inferred from homology"/>